<reference key="1">
    <citation type="journal article" date="2000" name="Science">
        <title>Complete genome sequence of Neisseria meningitidis serogroup B strain MC58.</title>
        <authorList>
            <person name="Tettelin H."/>
            <person name="Saunders N.J."/>
            <person name="Heidelberg J.F."/>
            <person name="Jeffries A.C."/>
            <person name="Nelson K.E."/>
            <person name="Eisen J.A."/>
            <person name="Ketchum K.A."/>
            <person name="Hood D.W."/>
            <person name="Peden J.F."/>
            <person name="Dodson R.J."/>
            <person name="Nelson W.C."/>
            <person name="Gwinn M.L."/>
            <person name="DeBoy R.T."/>
            <person name="Peterson J.D."/>
            <person name="Hickey E.K."/>
            <person name="Haft D.H."/>
            <person name="Salzberg S.L."/>
            <person name="White O."/>
            <person name="Fleischmann R.D."/>
            <person name="Dougherty B.A."/>
            <person name="Mason T.M."/>
            <person name="Ciecko A."/>
            <person name="Parksey D.S."/>
            <person name="Blair E."/>
            <person name="Cittone H."/>
            <person name="Clark E.B."/>
            <person name="Cotton M.D."/>
            <person name="Utterback T.R."/>
            <person name="Khouri H.M."/>
            <person name="Qin H."/>
            <person name="Vamathevan J.J."/>
            <person name="Gill J."/>
            <person name="Scarlato V."/>
            <person name="Masignani V."/>
            <person name="Pizza M."/>
            <person name="Grandi G."/>
            <person name="Sun L."/>
            <person name="Smith H.O."/>
            <person name="Fraser C.M."/>
            <person name="Moxon E.R."/>
            <person name="Rappuoli R."/>
            <person name="Venter J.C."/>
        </authorList>
    </citation>
    <scope>NUCLEOTIDE SEQUENCE [LARGE SCALE GENOMIC DNA]</scope>
    <source>
        <strain>ATCC BAA-335 / MC58</strain>
    </source>
</reference>
<gene>
    <name evidence="1" type="primary">mnmA</name>
    <name type="synonym">trmU</name>
    <name type="ordered locus">NMB1556</name>
</gene>
<comment type="function">
    <text evidence="1">Catalyzes the 2-thiolation of uridine at the wobble position (U34) of tRNA, leading to the formation of s(2)U34.</text>
</comment>
<comment type="catalytic activity">
    <reaction evidence="1">
        <text>S-sulfanyl-L-cysteinyl-[protein] + uridine(34) in tRNA + AH2 + ATP = 2-thiouridine(34) in tRNA + L-cysteinyl-[protein] + A + AMP + diphosphate + H(+)</text>
        <dbReference type="Rhea" id="RHEA:47032"/>
        <dbReference type="Rhea" id="RHEA-COMP:10131"/>
        <dbReference type="Rhea" id="RHEA-COMP:11726"/>
        <dbReference type="Rhea" id="RHEA-COMP:11727"/>
        <dbReference type="Rhea" id="RHEA-COMP:11728"/>
        <dbReference type="ChEBI" id="CHEBI:13193"/>
        <dbReference type="ChEBI" id="CHEBI:15378"/>
        <dbReference type="ChEBI" id="CHEBI:17499"/>
        <dbReference type="ChEBI" id="CHEBI:29950"/>
        <dbReference type="ChEBI" id="CHEBI:30616"/>
        <dbReference type="ChEBI" id="CHEBI:33019"/>
        <dbReference type="ChEBI" id="CHEBI:61963"/>
        <dbReference type="ChEBI" id="CHEBI:65315"/>
        <dbReference type="ChEBI" id="CHEBI:87170"/>
        <dbReference type="ChEBI" id="CHEBI:456215"/>
        <dbReference type="EC" id="2.8.1.13"/>
    </reaction>
</comment>
<comment type="subcellular location">
    <subcellularLocation>
        <location evidence="1">Cytoplasm</location>
    </subcellularLocation>
</comment>
<comment type="similarity">
    <text evidence="1">Belongs to the MnmA/TRMU family.</text>
</comment>
<feature type="chain" id="PRO_0000121659" description="tRNA-specific 2-thiouridylase MnmA">
    <location>
        <begin position="1"/>
        <end position="367"/>
    </location>
</feature>
<feature type="region of interest" description="Interaction with target base in tRNA" evidence="1">
    <location>
        <begin position="99"/>
        <end position="101"/>
    </location>
</feature>
<feature type="region of interest" description="Interaction with tRNA" evidence="1">
    <location>
        <begin position="150"/>
        <end position="152"/>
    </location>
</feature>
<feature type="region of interest" description="Interaction with tRNA" evidence="1">
    <location>
        <begin position="307"/>
        <end position="308"/>
    </location>
</feature>
<feature type="active site" description="Nucleophile" evidence="1">
    <location>
        <position position="104"/>
    </location>
</feature>
<feature type="active site" description="Cysteine persulfide intermediate" evidence="1">
    <location>
        <position position="200"/>
    </location>
</feature>
<feature type="binding site" evidence="1">
    <location>
        <begin position="13"/>
        <end position="20"/>
    </location>
    <ligand>
        <name>ATP</name>
        <dbReference type="ChEBI" id="CHEBI:30616"/>
    </ligand>
</feature>
<feature type="binding site" evidence="1">
    <location>
        <position position="39"/>
    </location>
    <ligand>
        <name>ATP</name>
        <dbReference type="ChEBI" id="CHEBI:30616"/>
    </ligand>
</feature>
<feature type="binding site" evidence="1">
    <location>
        <position position="128"/>
    </location>
    <ligand>
        <name>ATP</name>
        <dbReference type="ChEBI" id="CHEBI:30616"/>
    </ligand>
</feature>
<feature type="site" description="Interaction with tRNA" evidence="1">
    <location>
        <position position="129"/>
    </location>
</feature>
<feature type="site" description="Interaction with tRNA" evidence="1">
    <location>
        <position position="340"/>
    </location>
</feature>
<feature type="disulfide bond" description="Alternate" evidence="1">
    <location>
        <begin position="104"/>
        <end position="200"/>
    </location>
</feature>
<keyword id="KW-0067">ATP-binding</keyword>
<keyword id="KW-0963">Cytoplasm</keyword>
<keyword id="KW-1015">Disulfide bond</keyword>
<keyword id="KW-0547">Nucleotide-binding</keyword>
<keyword id="KW-1185">Reference proteome</keyword>
<keyword id="KW-0694">RNA-binding</keyword>
<keyword id="KW-0808">Transferase</keyword>
<keyword id="KW-0819">tRNA processing</keyword>
<keyword id="KW-0820">tRNA-binding</keyword>
<evidence type="ECO:0000255" key="1">
    <source>
        <dbReference type="HAMAP-Rule" id="MF_00144"/>
    </source>
</evidence>
<proteinExistence type="inferred from homology"/>
<organism>
    <name type="scientific">Neisseria meningitidis serogroup B (strain ATCC BAA-335 / MC58)</name>
    <dbReference type="NCBI Taxonomy" id="122586"/>
    <lineage>
        <taxon>Bacteria</taxon>
        <taxon>Pseudomonadati</taxon>
        <taxon>Pseudomonadota</taxon>
        <taxon>Betaproteobacteria</taxon>
        <taxon>Neisseriales</taxon>
        <taxon>Neisseriaceae</taxon>
        <taxon>Neisseria</taxon>
    </lineage>
</organism>
<accession>Q9JYJ6</accession>
<protein>
    <recommendedName>
        <fullName evidence="1">tRNA-specific 2-thiouridylase MnmA</fullName>
        <ecNumber evidence="1">2.8.1.13</ecNumber>
    </recommendedName>
</protein>
<name>MNMA_NEIMB</name>
<sequence>MNTTANPSNIIVGLSGGVDSSVTAALLKQQGYQVRGVFMQNWEDDDNDEYCSIKQDSFDAIAVADIIGIDIDIVNFAAQYKDKVFAYFLQEYSAGRTPNPDVLCNAEIKFKCFLDYAVGQGADTIATGHYARKEVRNGVHYLLKGLDRNKDQSYFLYRLKPFQLERAIFPLGGLEKPEVRRLAAEFKLPTAAKKDSTGICFIGERPFREFLQKYLPTDNGKMVTPEGKTVGEHVGLMFYTLGQRKGLGIGGAGEPWFVAAKDLTKNELIVVQGHDHPLLYTRSLVMNDLSFTLPERPKAGRYTCKTRYRMADAPCELRYLDDETAELVFDEPQWAVTPGQSAVLYDGDICLGGGIIQTTDKPVIITR</sequence>
<dbReference type="EC" id="2.8.1.13" evidence="1"/>
<dbReference type="EMBL" id="AE002098">
    <property type="protein sequence ID" value="AAF41910.1"/>
    <property type="molecule type" value="Genomic_DNA"/>
</dbReference>
<dbReference type="PIR" id="A81069">
    <property type="entry name" value="A81069"/>
</dbReference>
<dbReference type="RefSeq" id="NP_274563.1">
    <property type="nucleotide sequence ID" value="NC_003112.2"/>
</dbReference>
<dbReference type="RefSeq" id="WP_002232768.1">
    <property type="nucleotide sequence ID" value="NC_003112.2"/>
</dbReference>
<dbReference type="SMR" id="Q9JYJ6"/>
<dbReference type="FunCoup" id="Q9JYJ6">
    <property type="interactions" value="526"/>
</dbReference>
<dbReference type="STRING" id="122586.NMB1556"/>
<dbReference type="PaxDb" id="122586-NMB1556"/>
<dbReference type="KEGG" id="nme:NMB1556"/>
<dbReference type="PATRIC" id="fig|122586.8.peg.2002"/>
<dbReference type="HOGENOM" id="CLU_035188_1_0_4"/>
<dbReference type="InParanoid" id="Q9JYJ6"/>
<dbReference type="OrthoDB" id="9800696at2"/>
<dbReference type="Proteomes" id="UP000000425">
    <property type="component" value="Chromosome"/>
</dbReference>
<dbReference type="GO" id="GO:0005737">
    <property type="term" value="C:cytoplasm"/>
    <property type="evidence" value="ECO:0007669"/>
    <property type="project" value="UniProtKB-SubCell"/>
</dbReference>
<dbReference type="GO" id="GO:0005524">
    <property type="term" value="F:ATP binding"/>
    <property type="evidence" value="ECO:0007669"/>
    <property type="project" value="UniProtKB-KW"/>
</dbReference>
<dbReference type="GO" id="GO:0000049">
    <property type="term" value="F:tRNA binding"/>
    <property type="evidence" value="ECO:0007669"/>
    <property type="project" value="UniProtKB-KW"/>
</dbReference>
<dbReference type="GO" id="GO:0103016">
    <property type="term" value="F:tRNA-uridine 2-sulfurtransferase activity"/>
    <property type="evidence" value="ECO:0007669"/>
    <property type="project" value="UniProtKB-EC"/>
</dbReference>
<dbReference type="GO" id="GO:0002143">
    <property type="term" value="P:tRNA wobble position uridine thiolation"/>
    <property type="evidence" value="ECO:0000318"/>
    <property type="project" value="GO_Central"/>
</dbReference>
<dbReference type="CDD" id="cd01998">
    <property type="entry name" value="MnmA_TRMU-like"/>
    <property type="match status" value="1"/>
</dbReference>
<dbReference type="FunFam" id="2.30.30.280:FF:000001">
    <property type="entry name" value="tRNA-specific 2-thiouridylase MnmA"/>
    <property type="match status" value="1"/>
</dbReference>
<dbReference type="FunFam" id="2.40.30.10:FF:000023">
    <property type="entry name" value="tRNA-specific 2-thiouridylase MnmA"/>
    <property type="match status" value="1"/>
</dbReference>
<dbReference type="FunFam" id="3.40.50.620:FF:000004">
    <property type="entry name" value="tRNA-specific 2-thiouridylase MnmA"/>
    <property type="match status" value="1"/>
</dbReference>
<dbReference type="Gene3D" id="2.30.30.280">
    <property type="entry name" value="Adenine nucleotide alpha hydrolases-like domains"/>
    <property type="match status" value="1"/>
</dbReference>
<dbReference type="Gene3D" id="3.40.50.620">
    <property type="entry name" value="HUPs"/>
    <property type="match status" value="1"/>
</dbReference>
<dbReference type="Gene3D" id="2.40.30.10">
    <property type="entry name" value="Translation factors"/>
    <property type="match status" value="1"/>
</dbReference>
<dbReference type="HAMAP" id="MF_00144">
    <property type="entry name" value="tRNA_thiouridyl_MnmA"/>
    <property type="match status" value="1"/>
</dbReference>
<dbReference type="InterPro" id="IPR004506">
    <property type="entry name" value="MnmA-like"/>
</dbReference>
<dbReference type="InterPro" id="IPR046885">
    <property type="entry name" value="MnmA-like_C"/>
</dbReference>
<dbReference type="InterPro" id="IPR046884">
    <property type="entry name" value="MnmA-like_central"/>
</dbReference>
<dbReference type="InterPro" id="IPR023382">
    <property type="entry name" value="MnmA-like_central_sf"/>
</dbReference>
<dbReference type="InterPro" id="IPR014729">
    <property type="entry name" value="Rossmann-like_a/b/a_fold"/>
</dbReference>
<dbReference type="NCBIfam" id="NF001138">
    <property type="entry name" value="PRK00143.1"/>
    <property type="match status" value="1"/>
</dbReference>
<dbReference type="NCBIfam" id="TIGR00420">
    <property type="entry name" value="trmU"/>
    <property type="match status" value="1"/>
</dbReference>
<dbReference type="PANTHER" id="PTHR11933:SF5">
    <property type="entry name" value="MITOCHONDRIAL TRNA-SPECIFIC 2-THIOURIDYLASE 1"/>
    <property type="match status" value="1"/>
</dbReference>
<dbReference type="PANTHER" id="PTHR11933">
    <property type="entry name" value="TRNA 5-METHYLAMINOMETHYL-2-THIOURIDYLATE -METHYLTRANSFERASE"/>
    <property type="match status" value="1"/>
</dbReference>
<dbReference type="Pfam" id="PF03054">
    <property type="entry name" value="tRNA_Me_trans"/>
    <property type="match status" value="1"/>
</dbReference>
<dbReference type="Pfam" id="PF20258">
    <property type="entry name" value="tRNA_Me_trans_C"/>
    <property type="match status" value="1"/>
</dbReference>
<dbReference type="Pfam" id="PF20259">
    <property type="entry name" value="tRNA_Me_trans_M"/>
    <property type="match status" value="1"/>
</dbReference>
<dbReference type="SUPFAM" id="SSF52402">
    <property type="entry name" value="Adenine nucleotide alpha hydrolases-like"/>
    <property type="match status" value="1"/>
</dbReference>